<protein>
    <recommendedName>
        <fullName evidence="1">Thiol peroxidase</fullName>
        <shortName evidence="1">Tpx</shortName>
        <ecNumber evidence="1">1.11.1.24</ecNumber>
    </recommendedName>
    <alternativeName>
        <fullName evidence="1">Peroxiredoxin tpx</fullName>
        <shortName evidence="1">Prx</shortName>
    </alternativeName>
    <alternativeName>
        <fullName evidence="1">Thioredoxin peroxidase</fullName>
    </alternativeName>
    <alternativeName>
        <fullName evidence="1">Thioredoxin-dependent peroxiredoxin</fullName>
    </alternativeName>
</protein>
<dbReference type="EC" id="1.11.1.24" evidence="1"/>
<dbReference type="EMBL" id="BX571856">
    <property type="protein sequence ID" value="CAG40782.1"/>
    <property type="molecule type" value="Genomic_DNA"/>
</dbReference>
<dbReference type="RefSeq" id="WP_000136257.1">
    <property type="nucleotide sequence ID" value="NC_002952.2"/>
</dbReference>
<dbReference type="SMR" id="Q6GFZ4"/>
<dbReference type="KEGG" id="sar:SAR1791"/>
<dbReference type="HOGENOM" id="CLU_042529_12_0_9"/>
<dbReference type="Proteomes" id="UP000000596">
    <property type="component" value="Chromosome"/>
</dbReference>
<dbReference type="GO" id="GO:0008379">
    <property type="term" value="F:thioredoxin peroxidase activity"/>
    <property type="evidence" value="ECO:0007669"/>
    <property type="project" value="UniProtKB-UniRule"/>
</dbReference>
<dbReference type="CDD" id="cd03014">
    <property type="entry name" value="PRX_Atyp2cys"/>
    <property type="match status" value="1"/>
</dbReference>
<dbReference type="Gene3D" id="3.40.30.10">
    <property type="entry name" value="Glutaredoxin"/>
    <property type="match status" value="1"/>
</dbReference>
<dbReference type="HAMAP" id="MF_00269">
    <property type="entry name" value="Tpx"/>
    <property type="match status" value="1"/>
</dbReference>
<dbReference type="InterPro" id="IPR013740">
    <property type="entry name" value="Redoxin"/>
</dbReference>
<dbReference type="InterPro" id="IPR036249">
    <property type="entry name" value="Thioredoxin-like_sf"/>
</dbReference>
<dbReference type="InterPro" id="IPR013766">
    <property type="entry name" value="Thioredoxin_domain"/>
</dbReference>
<dbReference type="InterPro" id="IPR002065">
    <property type="entry name" value="TPX"/>
</dbReference>
<dbReference type="InterPro" id="IPR018219">
    <property type="entry name" value="Tpx_CS"/>
</dbReference>
<dbReference type="InterPro" id="IPR050455">
    <property type="entry name" value="Tpx_Peroxidase_subfamily"/>
</dbReference>
<dbReference type="NCBIfam" id="NF001808">
    <property type="entry name" value="PRK00522.1"/>
    <property type="match status" value="1"/>
</dbReference>
<dbReference type="PANTHER" id="PTHR43110">
    <property type="entry name" value="THIOL PEROXIDASE"/>
    <property type="match status" value="1"/>
</dbReference>
<dbReference type="PANTHER" id="PTHR43110:SF1">
    <property type="entry name" value="THIOL PEROXIDASE"/>
    <property type="match status" value="1"/>
</dbReference>
<dbReference type="Pfam" id="PF08534">
    <property type="entry name" value="Redoxin"/>
    <property type="match status" value="1"/>
</dbReference>
<dbReference type="SUPFAM" id="SSF52833">
    <property type="entry name" value="Thioredoxin-like"/>
    <property type="match status" value="1"/>
</dbReference>
<dbReference type="PROSITE" id="PS51352">
    <property type="entry name" value="THIOREDOXIN_2"/>
    <property type="match status" value="1"/>
</dbReference>
<dbReference type="PROSITE" id="PS01265">
    <property type="entry name" value="TPX"/>
    <property type="match status" value="1"/>
</dbReference>
<keyword id="KW-0049">Antioxidant</keyword>
<keyword id="KW-1015">Disulfide bond</keyword>
<keyword id="KW-0560">Oxidoreductase</keyword>
<keyword id="KW-0575">Peroxidase</keyword>
<keyword id="KW-0676">Redox-active center</keyword>
<sequence>MTEITFKGGPIHLKGQQINEGDFAPDFTVLDNDLNQVTLADYAGKKKLISVVPSIDTGVCDQQTRKFNSEASKEEGIVLTISADLPFAQKRWCASAGLDNVITLSDHRDLSFGENYGVVMEELRLLARAVFVLDADNKVVYKEIVSEGTDFPDFDAALAAYKNI</sequence>
<comment type="function">
    <text evidence="1">Thiol-specific peroxidase that catalyzes the reduction of hydrogen peroxide and organic hydroperoxides to water and alcohols, respectively. Plays a role in cell protection against oxidative stress by detoxifying peroxides.</text>
</comment>
<comment type="catalytic activity">
    <reaction evidence="1">
        <text>a hydroperoxide + [thioredoxin]-dithiol = an alcohol + [thioredoxin]-disulfide + H2O</text>
        <dbReference type="Rhea" id="RHEA:62620"/>
        <dbReference type="Rhea" id="RHEA-COMP:10698"/>
        <dbReference type="Rhea" id="RHEA-COMP:10700"/>
        <dbReference type="ChEBI" id="CHEBI:15377"/>
        <dbReference type="ChEBI" id="CHEBI:29950"/>
        <dbReference type="ChEBI" id="CHEBI:30879"/>
        <dbReference type="ChEBI" id="CHEBI:35924"/>
        <dbReference type="ChEBI" id="CHEBI:50058"/>
        <dbReference type="EC" id="1.11.1.24"/>
    </reaction>
</comment>
<comment type="subunit">
    <text evidence="1">Homodimer.</text>
</comment>
<comment type="miscellaneous">
    <text evidence="1">The active site is a conserved redox-active cysteine residue, the peroxidatic cysteine (C(P)), which makes the nucleophilic attack on the peroxide substrate. The peroxide oxidizes the C(P)-SH to cysteine sulfenic acid (C(P)-SOH), which then reacts with another cysteine residue, the resolving cysteine (C(R)), to form a disulfide bridge. The disulfide is subsequently reduced by an appropriate electron donor to complete the catalytic cycle. In this atypical 2-Cys peroxiredoxin, C(R) is present in the same subunit to form an intramolecular disulfide. The disulfide is subsequently reduced by thioredoxin.</text>
</comment>
<comment type="similarity">
    <text evidence="1">Belongs to the peroxiredoxin family. Tpx subfamily.</text>
</comment>
<evidence type="ECO:0000255" key="1">
    <source>
        <dbReference type="HAMAP-Rule" id="MF_00269"/>
    </source>
</evidence>
<feature type="chain" id="PRO_0000187901" description="Thiol peroxidase">
    <location>
        <begin position="1"/>
        <end position="164"/>
    </location>
</feature>
<feature type="domain" description="Thioredoxin" evidence="1">
    <location>
        <begin position="18"/>
        <end position="163"/>
    </location>
</feature>
<feature type="active site" description="Cysteine sulfenic acid (-SOH) intermediate" evidence="1">
    <location>
        <position position="60"/>
    </location>
</feature>
<feature type="disulfide bond" description="Redox-active" evidence="1">
    <location>
        <begin position="60"/>
        <end position="93"/>
    </location>
</feature>
<organism>
    <name type="scientific">Staphylococcus aureus (strain MRSA252)</name>
    <dbReference type="NCBI Taxonomy" id="282458"/>
    <lineage>
        <taxon>Bacteria</taxon>
        <taxon>Bacillati</taxon>
        <taxon>Bacillota</taxon>
        <taxon>Bacilli</taxon>
        <taxon>Bacillales</taxon>
        <taxon>Staphylococcaceae</taxon>
        <taxon>Staphylococcus</taxon>
    </lineage>
</organism>
<gene>
    <name evidence="1" type="primary">tpx</name>
    <name type="ordered locus">SAR1791</name>
</gene>
<proteinExistence type="inferred from homology"/>
<reference key="1">
    <citation type="journal article" date="2004" name="Proc. Natl. Acad. Sci. U.S.A.">
        <title>Complete genomes of two clinical Staphylococcus aureus strains: evidence for the rapid evolution of virulence and drug resistance.</title>
        <authorList>
            <person name="Holden M.T.G."/>
            <person name="Feil E.J."/>
            <person name="Lindsay J.A."/>
            <person name="Peacock S.J."/>
            <person name="Day N.P.J."/>
            <person name="Enright M.C."/>
            <person name="Foster T.J."/>
            <person name="Moore C.E."/>
            <person name="Hurst L."/>
            <person name="Atkin R."/>
            <person name="Barron A."/>
            <person name="Bason N."/>
            <person name="Bentley S.D."/>
            <person name="Chillingworth C."/>
            <person name="Chillingworth T."/>
            <person name="Churcher C."/>
            <person name="Clark L."/>
            <person name="Corton C."/>
            <person name="Cronin A."/>
            <person name="Doggett J."/>
            <person name="Dowd L."/>
            <person name="Feltwell T."/>
            <person name="Hance Z."/>
            <person name="Harris B."/>
            <person name="Hauser H."/>
            <person name="Holroyd S."/>
            <person name="Jagels K."/>
            <person name="James K.D."/>
            <person name="Lennard N."/>
            <person name="Line A."/>
            <person name="Mayes R."/>
            <person name="Moule S."/>
            <person name="Mungall K."/>
            <person name="Ormond D."/>
            <person name="Quail M.A."/>
            <person name="Rabbinowitsch E."/>
            <person name="Rutherford K.M."/>
            <person name="Sanders M."/>
            <person name="Sharp S."/>
            <person name="Simmonds M."/>
            <person name="Stevens K."/>
            <person name="Whitehead S."/>
            <person name="Barrell B.G."/>
            <person name="Spratt B.G."/>
            <person name="Parkhill J."/>
        </authorList>
    </citation>
    <scope>NUCLEOTIDE SEQUENCE [LARGE SCALE GENOMIC DNA]</scope>
    <source>
        <strain>MRSA252</strain>
    </source>
</reference>
<accession>Q6GFZ4</accession>
<name>TPX_STAAR</name>